<reference key="1">
    <citation type="journal article" date="2006" name="PLoS Biol.">
        <title>Metabolic complementarity and genomics of the dual bacterial symbiosis of sharpshooters.</title>
        <authorList>
            <person name="Wu D."/>
            <person name="Daugherty S.C."/>
            <person name="Van Aken S.E."/>
            <person name="Pai G.H."/>
            <person name="Watkins K.L."/>
            <person name="Khouri H."/>
            <person name="Tallon L.J."/>
            <person name="Zaborsky J.M."/>
            <person name="Dunbar H.E."/>
            <person name="Tran P.L."/>
            <person name="Moran N.A."/>
            <person name="Eisen J.A."/>
        </authorList>
    </citation>
    <scope>NUCLEOTIDE SEQUENCE [LARGE SCALE GENOMIC DNA]</scope>
</reference>
<evidence type="ECO:0000255" key="1">
    <source>
        <dbReference type="HAMAP-Rule" id="MF_01194"/>
    </source>
</evidence>
<name>HSPQ_BAUCH</name>
<proteinExistence type="inferred from homology"/>
<keyword id="KW-0963">Cytoplasm</keyword>
<keyword id="KW-1185">Reference proteome</keyword>
<keyword id="KW-0346">Stress response</keyword>
<accession>Q1LT59</accession>
<feature type="chain" id="PRO_0000315298" description="Heat shock protein HspQ">
    <location>
        <begin position="1"/>
        <end position="105"/>
    </location>
</feature>
<sequence length="105" mass="11997">MIASKFGIGQQVRHKLFGYLGVIIDVDPEYSLDKPYIDKIAADDSLRTAPWYHVVMEDEDGKPVHTYLAEAQLGYEAFLEHPEQPTLDELAESIRLQLQAPRLRN</sequence>
<dbReference type="EMBL" id="CP000238">
    <property type="protein sequence ID" value="ABF13859.1"/>
    <property type="molecule type" value="Genomic_DNA"/>
</dbReference>
<dbReference type="RefSeq" id="WP_011520588.1">
    <property type="nucleotide sequence ID" value="NC_007984.1"/>
</dbReference>
<dbReference type="SMR" id="Q1LT59"/>
<dbReference type="STRING" id="374463.BCI_0412"/>
<dbReference type="KEGG" id="bci:BCI_0412"/>
<dbReference type="HOGENOM" id="CLU_123865_1_0_6"/>
<dbReference type="OrthoDB" id="9806050at2"/>
<dbReference type="Proteomes" id="UP000002427">
    <property type="component" value="Chromosome"/>
</dbReference>
<dbReference type="GO" id="GO:0005737">
    <property type="term" value="C:cytoplasm"/>
    <property type="evidence" value="ECO:0007669"/>
    <property type="project" value="UniProtKB-SubCell"/>
</dbReference>
<dbReference type="GO" id="GO:0003677">
    <property type="term" value="F:DNA binding"/>
    <property type="evidence" value="ECO:0007669"/>
    <property type="project" value="InterPro"/>
</dbReference>
<dbReference type="GO" id="GO:0009408">
    <property type="term" value="P:response to heat"/>
    <property type="evidence" value="ECO:0007669"/>
    <property type="project" value="UniProtKB-UniRule"/>
</dbReference>
<dbReference type="Gene3D" id="2.30.30.390">
    <property type="entry name" value="Hemimethylated DNA-binding domain"/>
    <property type="match status" value="1"/>
</dbReference>
<dbReference type="HAMAP" id="MF_01194">
    <property type="entry name" value="HspQ"/>
    <property type="match status" value="1"/>
</dbReference>
<dbReference type="InterPro" id="IPR011722">
    <property type="entry name" value="Hemimethylated_DNA-bd_dom"/>
</dbReference>
<dbReference type="InterPro" id="IPR036623">
    <property type="entry name" value="Hemimethylated_DNA-bd_sf"/>
</dbReference>
<dbReference type="InterPro" id="IPR022866">
    <property type="entry name" value="HspQ"/>
</dbReference>
<dbReference type="NCBIfam" id="NF010729">
    <property type="entry name" value="PRK14129.1"/>
    <property type="match status" value="1"/>
</dbReference>
<dbReference type="NCBIfam" id="TIGR02097">
    <property type="entry name" value="yccV"/>
    <property type="match status" value="1"/>
</dbReference>
<dbReference type="Pfam" id="PF08755">
    <property type="entry name" value="YccV-like"/>
    <property type="match status" value="1"/>
</dbReference>
<dbReference type="SMART" id="SM00992">
    <property type="entry name" value="YccV-like"/>
    <property type="match status" value="1"/>
</dbReference>
<dbReference type="SUPFAM" id="SSF141255">
    <property type="entry name" value="YccV-like"/>
    <property type="match status" value="1"/>
</dbReference>
<protein>
    <recommendedName>
        <fullName evidence="1">Heat shock protein HspQ</fullName>
    </recommendedName>
</protein>
<comment type="function">
    <text evidence="1">Involved in the degradation of certain denaturated proteins, including DnaA, during heat shock stress.</text>
</comment>
<comment type="subcellular location">
    <subcellularLocation>
        <location evidence="1">Cytoplasm</location>
    </subcellularLocation>
</comment>
<comment type="similarity">
    <text evidence="1">Belongs to the HspQ family.</text>
</comment>
<gene>
    <name evidence="1" type="primary">hspQ</name>
    <name type="ordered locus">BCI_0412</name>
</gene>
<organism>
    <name type="scientific">Baumannia cicadellinicola subsp. Homalodisca coagulata</name>
    <dbReference type="NCBI Taxonomy" id="374463"/>
    <lineage>
        <taxon>Bacteria</taxon>
        <taxon>Pseudomonadati</taxon>
        <taxon>Pseudomonadota</taxon>
        <taxon>Gammaproteobacteria</taxon>
        <taxon>Candidatus Palibaumannia</taxon>
    </lineage>
</organism>